<feature type="chain" id="PRO_0000172384" description="Large ribosomal subunit protein bL32">
    <location>
        <begin position="1"/>
        <end position="61"/>
    </location>
</feature>
<feature type="region of interest" description="Disordered" evidence="2">
    <location>
        <begin position="1"/>
        <end position="20"/>
    </location>
</feature>
<feature type="compositionally biased region" description="Basic residues" evidence="2">
    <location>
        <begin position="1"/>
        <end position="19"/>
    </location>
</feature>
<accession>Q7MT50</accession>
<comment type="similarity">
    <text evidence="1">Belongs to the bacterial ribosomal protein bL32 family.</text>
</comment>
<gene>
    <name evidence="1" type="primary">rpmF</name>
    <name type="ordered locus">PG_2140</name>
</gene>
<protein>
    <recommendedName>
        <fullName evidence="1">Large ribosomal subunit protein bL32</fullName>
    </recommendedName>
    <alternativeName>
        <fullName evidence="3">50S ribosomal protein L32</fullName>
    </alternativeName>
</protein>
<proteinExistence type="inferred from homology"/>
<name>RL32_PORGI</name>
<dbReference type="EMBL" id="AE015924">
    <property type="protein sequence ID" value="AAQ67093.1"/>
    <property type="molecule type" value="Genomic_DNA"/>
</dbReference>
<dbReference type="RefSeq" id="WP_010956508.1">
    <property type="nucleotide sequence ID" value="NC_002950.2"/>
</dbReference>
<dbReference type="SMR" id="Q7MT50"/>
<dbReference type="STRING" id="242619.PG_2140"/>
<dbReference type="EnsemblBacteria" id="AAQ67093">
    <property type="protein sequence ID" value="AAQ67093"/>
    <property type="gene ID" value="PG_2140"/>
</dbReference>
<dbReference type="GeneID" id="31477326"/>
<dbReference type="KEGG" id="pgi:PG_2140"/>
<dbReference type="eggNOG" id="COG0333">
    <property type="taxonomic scope" value="Bacteria"/>
</dbReference>
<dbReference type="HOGENOM" id="CLU_129084_1_3_10"/>
<dbReference type="BioCyc" id="PGIN242619:G1G02-2009-MONOMER"/>
<dbReference type="Proteomes" id="UP000000588">
    <property type="component" value="Chromosome"/>
</dbReference>
<dbReference type="GO" id="GO:0015934">
    <property type="term" value="C:large ribosomal subunit"/>
    <property type="evidence" value="ECO:0007669"/>
    <property type="project" value="InterPro"/>
</dbReference>
<dbReference type="GO" id="GO:0003735">
    <property type="term" value="F:structural constituent of ribosome"/>
    <property type="evidence" value="ECO:0007669"/>
    <property type="project" value="InterPro"/>
</dbReference>
<dbReference type="GO" id="GO:0006412">
    <property type="term" value="P:translation"/>
    <property type="evidence" value="ECO:0007669"/>
    <property type="project" value="UniProtKB-UniRule"/>
</dbReference>
<dbReference type="HAMAP" id="MF_00340">
    <property type="entry name" value="Ribosomal_bL32"/>
    <property type="match status" value="1"/>
</dbReference>
<dbReference type="InterPro" id="IPR002677">
    <property type="entry name" value="Ribosomal_bL32"/>
</dbReference>
<dbReference type="InterPro" id="IPR044957">
    <property type="entry name" value="Ribosomal_bL32_bact"/>
</dbReference>
<dbReference type="InterPro" id="IPR011332">
    <property type="entry name" value="Ribosomal_zn-bd"/>
</dbReference>
<dbReference type="NCBIfam" id="TIGR01031">
    <property type="entry name" value="rpmF_bact"/>
    <property type="match status" value="1"/>
</dbReference>
<dbReference type="PANTHER" id="PTHR35534">
    <property type="entry name" value="50S RIBOSOMAL PROTEIN L32"/>
    <property type="match status" value="1"/>
</dbReference>
<dbReference type="PANTHER" id="PTHR35534:SF1">
    <property type="entry name" value="LARGE RIBOSOMAL SUBUNIT PROTEIN BL32"/>
    <property type="match status" value="1"/>
</dbReference>
<dbReference type="Pfam" id="PF01783">
    <property type="entry name" value="Ribosomal_L32p"/>
    <property type="match status" value="1"/>
</dbReference>
<dbReference type="SUPFAM" id="SSF57829">
    <property type="entry name" value="Zn-binding ribosomal proteins"/>
    <property type="match status" value="1"/>
</dbReference>
<reference key="1">
    <citation type="journal article" date="2003" name="J. Bacteriol.">
        <title>Complete genome sequence of the oral pathogenic bacterium Porphyromonas gingivalis strain W83.</title>
        <authorList>
            <person name="Nelson K.E."/>
            <person name="Fleischmann R.D."/>
            <person name="DeBoy R.T."/>
            <person name="Paulsen I.T."/>
            <person name="Fouts D.E."/>
            <person name="Eisen J.A."/>
            <person name="Daugherty S.C."/>
            <person name="Dodson R.J."/>
            <person name="Durkin A.S."/>
            <person name="Gwinn M.L."/>
            <person name="Haft D.H."/>
            <person name="Kolonay J.F."/>
            <person name="Nelson W.C."/>
            <person name="Mason T.M."/>
            <person name="Tallon L."/>
            <person name="Gray J."/>
            <person name="Granger D."/>
            <person name="Tettelin H."/>
            <person name="Dong H."/>
            <person name="Galvin J.L."/>
            <person name="Duncan M.J."/>
            <person name="Dewhirst F.E."/>
            <person name="Fraser C.M."/>
        </authorList>
    </citation>
    <scope>NUCLEOTIDE SEQUENCE [LARGE SCALE GENOMIC DNA]</scope>
    <source>
        <strain>ATCC BAA-308 / W83</strain>
    </source>
</reference>
<sequence>MAHPKRRQSKTRTAKRRTHDKAVMPTLAKCPNCGAWHIYHTVCGDCGYYRGKLAIEKEVAV</sequence>
<keyword id="KW-1185">Reference proteome</keyword>
<keyword id="KW-0687">Ribonucleoprotein</keyword>
<keyword id="KW-0689">Ribosomal protein</keyword>
<organism>
    <name type="scientific">Porphyromonas gingivalis (strain ATCC BAA-308 / W83)</name>
    <dbReference type="NCBI Taxonomy" id="242619"/>
    <lineage>
        <taxon>Bacteria</taxon>
        <taxon>Pseudomonadati</taxon>
        <taxon>Bacteroidota</taxon>
        <taxon>Bacteroidia</taxon>
        <taxon>Bacteroidales</taxon>
        <taxon>Porphyromonadaceae</taxon>
        <taxon>Porphyromonas</taxon>
    </lineage>
</organism>
<evidence type="ECO:0000255" key="1">
    <source>
        <dbReference type="HAMAP-Rule" id="MF_00340"/>
    </source>
</evidence>
<evidence type="ECO:0000256" key="2">
    <source>
        <dbReference type="SAM" id="MobiDB-lite"/>
    </source>
</evidence>
<evidence type="ECO:0000305" key="3"/>